<reference key="1">
    <citation type="journal article" date="2011" name="Proc. Natl. Acad. Sci. U.S.A.">
        <title>Genomic anatomy of Escherichia coli O157:H7 outbreaks.</title>
        <authorList>
            <person name="Eppinger M."/>
            <person name="Mammel M.K."/>
            <person name="Leclerc J.E."/>
            <person name="Ravel J."/>
            <person name="Cebula T.A."/>
        </authorList>
    </citation>
    <scope>NUCLEOTIDE SEQUENCE [LARGE SCALE GENOMIC DNA]</scope>
    <source>
        <strain>EC4115 / EHEC</strain>
    </source>
</reference>
<keyword id="KW-0106">Calcium</keyword>
<keyword id="KW-0249">Electron transport</keyword>
<keyword id="KW-0349">Heme</keyword>
<keyword id="KW-0408">Iron</keyword>
<keyword id="KW-0479">Metal-binding</keyword>
<keyword id="KW-0560">Oxidoreductase</keyword>
<keyword id="KW-0574">Periplasm</keyword>
<keyword id="KW-0732">Signal</keyword>
<keyword id="KW-0813">Transport</keyword>
<evidence type="ECO:0000255" key="1">
    <source>
        <dbReference type="HAMAP-Rule" id="MF_01182"/>
    </source>
</evidence>
<gene>
    <name evidence="1" type="primary">nrfA</name>
    <name type="ordered locus">ECH74115_5575</name>
</gene>
<name>NRFA_ECO5E</name>
<accession>B5Z1D1</accession>
<proteinExistence type="inferred from homology"/>
<sequence>MTRIKINARRIFSLLIPFFFFTSVHAEQTAAPAKPVTVEAKNETFAPQHPDQYLSWKATSEQSERVDALAEDPRLVILWAGYPFSHDYNKPRGHAFAVTDVRETLRTGAPKNAEDGPLPMACWSCKSPDVARLIQKDGEDGYFHGKWARGGPEIVNNLGCADCHNTASPEFAKGKPELTLSRPYAARAMEAIGKPFEKAGRFDQQSMVCGQCHVEYYFDGKNKAVKFPWDDGMKVENMEQYYDKIAFSDWTNSLSKTPMLKAQHPEYETWTAGIHGKNNVTCIDCHMPKVQNAEGKLYTDHKIGNPFDNFAQTCANCHTQDKAALQKVVAERKQSINDLKIKVEDQLVHAHFEAKAALDAGATEAEMKPIQDDIRHAQWRWDLAIASHGIHMHAPEEGLRMLGTAMDKAADARTKLARLLATKGITHEIQIPDISTKEKAQQAIGLNMEQIKAEKQDFIKTVIPQWEEQARKNGLLSQ</sequence>
<organism>
    <name type="scientific">Escherichia coli O157:H7 (strain EC4115 / EHEC)</name>
    <dbReference type="NCBI Taxonomy" id="444450"/>
    <lineage>
        <taxon>Bacteria</taxon>
        <taxon>Pseudomonadati</taxon>
        <taxon>Pseudomonadota</taxon>
        <taxon>Gammaproteobacteria</taxon>
        <taxon>Enterobacterales</taxon>
        <taxon>Enterobacteriaceae</taxon>
        <taxon>Escherichia</taxon>
    </lineage>
</organism>
<feature type="signal peptide" evidence="1">
    <location>
        <begin position="1"/>
        <end position="26"/>
    </location>
</feature>
<feature type="chain" id="PRO_1000138210" description="Cytochrome c-552">
    <location>
        <begin position="27"/>
        <end position="478"/>
    </location>
</feature>
<feature type="binding site" description="axial binding residue" evidence="1">
    <location>
        <position position="94"/>
    </location>
    <ligand>
        <name>heme c</name>
        <dbReference type="ChEBI" id="CHEBI:61717"/>
        <label>3</label>
    </ligand>
    <ligandPart>
        <name>Fe</name>
        <dbReference type="ChEBI" id="CHEBI:18248"/>
    </ligandPart>
</feature>
<feature type="binding site" description="covalent" evidence="1">
    <location>
        <position position="122"/>
    </location>
    <ligand>
        <name>heme</name>
        <dbReference type="ChEBI" id="CHEBI:30413"/>
        <label>1</label>
    </ligand>
</feature>
<feature type="binding site" description="covalent" evidence="1">
    <location>
        <position position="125"/>
    </location>
    <ligand>
        <name>heme</name>
        <dbReference type="ChEBI" id="CHEBI:30413"/>
        <label>1</label>
    </ligand>
</feature>
<feature type="binding site" description="axial binding residue" evidence="1">
    <location>
        <position position="126"/>
    </location>
    <ligand>
        <name>heme</name>
        <dbReference type="ChEBI" id="CHEBI:30413"/>
        <label>1</label>
    </ligand>
    <ligandPart>
        <name>Fe</name>
        <dbReference type="ChEBI" id="CHEBI:18248"/>
    </ligandPart>
</feature>
<feature type="binding site" description="covalent" evidence="1">
    <location>
        <position position="160"/>
    </location>
    <ligand>
        <name>heme c</name>
        <dbReference type="ChEBI" id="CHEBI:61717"/>
        <label>2</label>
    </ligand>
</feature>
<feature type="binding site" description="covalent" evidence="1">
    <location>
        <position position="163"/>
    </location>
    <ligand>
        <name>heme c</name>
        <dbReference type="ChEBI" id="CHEBI:61717"/>
        <label>2</label>
    </ligand>
</feature>
<feature type="binding site" description="axial binding residue" evidence="1">
    <location>
        <position position="164"/>
    </location>
    <ligand>
        <name>heme c</name>
        <dbReference type="ChEBI" id="CHEBI:61717"/>
        <label>2</label>
    </ligand>
    <ligandPart>
        <name>Fe</name>
        <dbReference type="ChEBI" id="CHEBI:18248"/>
    </ligandPart>
</feature>
<feature type="binding site" description="covalent" evidence="1">
    <location>
        <position position="209"/>
    </location>
    <ligand>
        <name>heme c</name>
        <dbReference type="ChEBI" id="CHEBI:61717"/>
        <label>3</label>
    </ligand>
</feature>
<feature type="binding site" description="covalent" evidence="1">
    <location>
        <position position="212"/>
    </location>
    <ligand>
        <name>heme c</name>
        <dbReference type="ChEBI" id="CHEBI:61717"/>
        <label>3</label>
    </ligand>
</feature>
<feature type="binding site" description="axial binding residue" evidence="1">
    <location>
        <position position="213"/>
    </location>
    <ligand>
        <name>heme c</name>
        <dbReference type="ChEBI" id="CHEBI:61717"/>
        <label>3</label>
    </ligand>
    <ligandPart>
        <name>Fe</name>
        <dbReference type="ChEBI" id="CHEBI:18248"/>
    </ligandPart>
</feature>
<feature type="binding site" evidence="1">
    <location>
        <position position="215"/>
    </location>
    <ligand>
        <name>Ca(2+)</name>
        <dbReference type="ChEBI" id="CHEBI:29108"/>
    </ligand>
</feature>
<feature type="binding site" evidence="1">
    <location>
        <position position="216"/>
    </location>
    <ligand>
        <name>Ca(2+)</name>
        <dbReference type="ChEBI" id="CHEBI:29108"/>
    </ligand>
</feature>
<feature type="binding site" evidence="1">
    <location>
        <position position="216"/>
    </location>
    <ligand>
        <name>substrate</name>
    </ligand>
</feature>
<feature type="binding site" evidence="1">
    <location>
        <position position="261"/>
    </location>
    <ligand>
        <name>Ca(2+)</name>
        <dbReference type="ChEBI" id="CHEBI:29108"/>
    </ligand>
</feature>
<feature type="binding site" evidence="1">
    <location>
        <position position="263"/>
    </location>
    <ligand>
        <name>Ca(2+)</name>
        <dbReference type="ChEBI" id="CHEBI:29108"/>
    </ligand>
</feature>
<feature type="binding site" evidence="1">
    <location>
        <position position="264"/>
    </location>
    <ligand>
        <name>substrate</name>
    </ligand>
</feature>
<feature type="binding site" description="axial binding residue" evidence="1">
    <location>
        <position position="275"/>
    </location>
    <ligand>
        <name>heme c</name>
        <dbReference type="ChEBI" id="CHEBI:61717"/>
        <label>5</label>
    </ligand>
    <ligandPart>
        <name>Fe</name>
        <dbReference type="ChEBI" id="CHEBI:18248"/>
    </ligandPart>
</feature>
<feature type="binding site" description="covalent" evidence="1">
    <location>
        <position position="282"/>
    </location>
    <ligand>
        <name>heme c</name>
        <dbReference type="ChEBI" id="CHEBI:61717"/>
        <label>4</label>
    </ligand>
</feature>
<feature type="binding site" description="covalent" evidence="1">
    <location>
        <position position="285"/>
    </location>
    <ligand>
        <name>heme c</name>
        <dbReference type="ChEBI" id="CHEBI:61717"/>
        <label>4</label>
    </ligand>
</feature>
<feature type="binding site" description="axial binding residue" evidence="1">
    <location>
        <position position="286"/>
    </location>
    <ligand>
        <name>heme c</name>
        <dbReference type="ChEBI" id="CHEBI:61717"/>
        <label>4</label>
    </ligand>
    <ligandPart>
        <name>Fe</name>
        <dbReference type="ChEBI" id="CHEBI:18248"/>
    </ligandPart>
</feature>
<feature type="binding site" description="axial binding residue" evidence="1">
    <location>
        <position position="301"/>
    </location>
    <ligand>
        <name>heme c</name>
        <dbReference type="ChEBI" id="CHEBI:61717"/>
        <label>2</label>
    </ligand>
    <ligandPart>
        <name>Fe</name>
        <dbReference type="ChEBI" id="CHEBI:18248"/>
    </ligandPart>
</feature>
<feature type="binding site" description="covalent" evidence="1">
    <location>
        <position position="314"/>
    </location>
    <ligand>
        <name>heme c</name>
        <dbReference type="ChEBI" id="CHEBI:61717"/>
        <label>5</label>
    </ligand>
</feature>
<feature type="binding site" description="covalent" evidence="1">
    <location>
        <position position="317"/>
    </location>
    <ligand>
        <name>heme c</name>
        <dbReference type="ChEBI" id="CHEBI:61717"/>
        <label>5</label>
    </ligand>
</feature>
<feature type="binding site" description="axial binding residue" evidence="1">
    <location>
        <position position="318"/>
    </location>
    <ligand>
        <name>heme c</name>
        <dbReference type="ChEBI" id="CHEBI:61717"/>
        <label>5</label>
    </ligand>
    <ligandPart>
        <name>Fe</name>
        <dbReference type="ChEBI" id="CHEBI:18248"/>
    </ligandPart>
</feature>
<feature type="binding site" description="axial binding residue" evidence="1">
    <location>
        <position position="393"/>
    </location>
    <ligand>
        <name>heme c</name>
        <dbReference type="ChEBI" id="CHEBI:61717"/>
        <label>4</label>
    </ligand>
    <ligandPart>
        <name>Fe</name>
        <dbReference type="ChEBI" id="CHEBI:18248"/>
    </ligandPart>
</feature>
<comment type="function">
    <text evidence="1">Catalyzes the reduction of nitrite to ammonia, consuming six electrons in the process.</text>
</comment>
<comment type="catalytic activity">
    <reaction evidence="1">
        <text>6 Fe(III)-[cytochrome c] + NH4(+) + 2 H2O = 6 Fe(II)-[cytochrome c] + nitrite + 8 H(+)</text>
        <dbReference type="Rhea" id="RHEA:13089"/>
        <dbReference type="Rhea" id="RHEA-COMP:10350"/>
        <dbReference type="Rhea" id="RHEA-COMP:14399"/>
        <dbReference type="ChEBI" id="CHEBI:15377"/>
        <dbReference type="ChEBI" id="CHEBI:15378"/>
        <dbReference type="ChEBI" id="CHEBI:16301"/>
        <dbReference type="ChEBI" id="CHEBI:28938"/>
        <dbReference type="ChEBI" id="CHEBI:29033"/>
        <dbReference type="ChEBI" id="CHEBI:29034"/>
        <dbReference type="EC" id="1.7.2.2"/>
    </reaction>
</comment>
<comment type="cofactor">
    <cofactor evidence="1">
        <name>Ca(2+)</name>
        <dbReference type="ChEBI" id="CHEBI:29108"/>
    </cofactor>
    <text evidence="1">Binds 1 Ca(2+) ion per monomer.</text>
</comment>
<comment type="cofactor">
    <cofactor evidence="1">
        <name>heme c</name>
        <dbReference type="ChEBI" id="CHEBI:61717"/>
    </cofactor>
    <text evidence="1">Binds 5 heme c groups covalently per monomer.</text>
</comment>
<comment type="pathway">
    <text evidence="1">Nitrogen metabolism; nitrate reduction (assimilation).</text>
</comment>
<comment type="subcellular location">
    <subcellularLocation>
        <location evidence="1">Periplasm</location>
    </subcellularLocation>
</comment>
<comment type="similarity">
    <text evidence="1">Belongs to the cytochrome c-552 family.</text>
</comment>
<protein>
    <recommendedName>
        <fullName evidence="1">Cytochrome c-552</fullName>
        <ecNumber evidence="1">1.7.2.2</ecNumber>
    </recommendedName>
    <alternativeName>
        <fullName evidence="1">Ammonia-forming cytochrome c nitrite reductase</fullName>
        <shortName evidence="1">Cytochrome c nitrite reductase</shortName>
    </alternativeName>
</protein>
<dbReference type="EC" id="1.7.2.2" evidence="1"/>
<dbReference type="EMBL" id="CP001164">
    <property type="protein sequence ID" value="ACI38126.1"/>
    <property type="molecule type" value="Genomic_DNA"/>
</dbReference>
<dbReference type="RefSeq" id="WP_001301522.1">
    <property type="nucleotide sequence ID" value="NC_011353.1"/>
</dbReference>
<dbReference type="SMR" id="B5Z1D1"/>
<dbReference type="KEGG" id="ecf:ECH74115_5575"/>
<dbReference type="HOGENOM" id="CLU_035040_1_0_6"/>
<dbReference type="UniPathway" id="UPA00653"/>
<dbReference type="GO" id="GO:0030288">
    <property type="term" value="C:outer membrane-bounded periplasmic space"/>
    <property type="evidence" value="ECO:0007669"/>
    <property type="project" value="TreeGrafter"/>
</dbReference>
<dbReference type="GO" id="GO:0005509">
    <property type="term" value="F:calcium ion binding"/>
    <property type="evidence" value="ECO:0007669"/>
    <property type="project" value="UniProtKB-UniRule"/>
</dbReference>
<dbReference type="GO" id="GO:0020037">
    <property type="term" value="F:heme binding"/>
    <property type="evidence" value="ECO:0007669"/>
    <property type="project" value="InterPro"/>
</dbReference>
<dbReference type="GO" id="GO:0005506">
    <property type="term" value="F:iron ion binding"/>
    <property type="evidence" value="ECO:0007669"/>
    <property type="project" value="UniProtKB-UniRule"/>
</dbReference>
<dbReference type="GO" id="GO:0042279">
    <property type="term" value="F:nitrite reductase (cytochrome, ammonia-forming) activity"/>
    <property type="evidence" value="ECO:0007669"/>
    <property type="project" value="UniProtKB-UniRule"/>
</dbReference>
<dbReference type="GO" id="GO:0019645">
    <property type="term" value="P:anaerobic electron transport chain"/>
    <property type="evidence" value="ECO:0007669"/>
    <property type="project" value="TreeGrafter"/>
</dbReference>
<dbReference type="GO" id="GO:0042128">
    <property type="term" value="P:nitrate assimilation"/>
    <property type="evidence" value="ECO:0007669"/>
    <property type="project" value="UniProtKB-UniRule"/>
</dbReference>
<dbReference type="CDD" id="cd00548">
    <property type="entry name" value="NrfA-like"/>
    <property type="match status" value="1"/>
</dbReference>
<dbReference type="FunFam" id="1.10.1130.10:FF:000002">
    <property type="entry name" value="Cytochrome c-552"/>
    <property type="match status" value="1"/>
</dbReference>
<dbReference type="FunFam" id="1.20.140.10:FF:000014">
    <property type="entry name" value="Cytochrome c-552"/>
    <property type="match status" value="1"/>
</dbReference>
<dbReference type="Gene3D" id="1.20.140.10">
    <property type="entry name" value="Butyryl-CoA Dehydrogenase, subunit A, domain 3"/>
    <property type="match status" value="1"/>
</dbReference>
<dbReference type="Gene3D" id="1.10.1130.10">
    <property type="entry name" value="Flavocytochrome C3, Chain A"/>
    <property type="match status" value="1"/>
</dbReference>
<dbReference type="HAMAP" id="MF_01182">
    <property type="entry name" value="Cytochrom_C552"/>
    <property type="match status" value="1"/>
</dbReference>
<dbReference type="InterPro" id="IPR003321">
    <property type="entry name" value="Cyt_c552"/>
</dbReference>
<dbReference type="InterPro" id="IPR017570">
    <property type="entry name" value="Cyt_c_NO2Rdtase_formate-dep"/>
</dbReference>
<dbReference type="InterPro" id="IPR036280">
    <property type="entry name" value="Multihaem_cyt_sf"/>
</dbReference>
<dbReference type="NCBIfam" id="TIGR03152">
    <property type="entry name" value="cyto_c552_HCOOH"/>
    <property type="match status" value="1"/>
</dbReference>
<dbReference type="NCBIfam" id="NF008339">
    <property type="entry name" value="PRK11125.1"/>
    <property type="match status" value="1"/>
</dbReference>
<dbReference type="PANTHER" id="PTHR30633:SF0">
    <property type="entry name" value="CYTOCHROME C-552"/>
    <property type="match status" value="1"/>
</dbReference>
<dbReference type="PANTHER" id="PTHR30633">
    <property type="entry name" value="CYTOCHROME C-552 RESPIRATORY NITRITE REDUCTASE"/>
    <property type="match status" value="1"/>
</dbReference>
<dbReference type="Pfam" id="PF02335">
    <property type="entry name" value="Cytochrom_C552"/>
    <property type="match status" value="1"/>
</dbReference>
<dbReference type="PIRSF" id="PIRSF000243">
    <property type="entry name" value="Cyt_c552"/>
    <property type="match status" value="1"/>
</dbReference>
<dbReference type="SUPFAM" id="SSF48695">
    <property type="entry name" value="Multiheme cytochromes"/>
    <property type="match status" value="1"/>
</dbReference>
<dbReference type="PROSITE" id="PS51008">
    <property type="entry name" value="MULTIHEME_CYTC"/>
    <property type="match status" value="1"/>
</dbReference>